<proteinExistence type="evidence at protein level"/>
<sequence>MRIIKCLDQIFRPVLPNVNINNIQKNKKINILYFIDVSKFHVFEQLLLEESLFRISNNTTEGLNNIGFVIVNNTCEEMNESKGNECIFNNKKCVILGISNKIKDHIKDTNYIKENKISLIKRFTGGGTIYINKNSLLVSLILPHKFEKNKKIYPSNITEWSYNYFYNTSKQIYDKTQINNEKNSLNKNHILFNQYFNYYENDYVYKDYDEHNKNIILKKVGGNAQSFARNYFVHHTSYIWTCDYKEMNNILLNPSKQPIYRNKRKHQHFLQSIKLCLHDDIHTPNIFIEKLIKHIKHIINYKNITDQHDYWFFNKINLKNINDHILRNSEHFDDIYVADMNLLQCIFNYYNNSSLFNNMRSTYFLDLEGKKVSDRYYDIPTYFL</sequence>
<name>LIPLB_PLAF7</name>
<keyword id="KW-0933">Apicoplast</keyword>
<keyword id="KW-0496">Mitochondrion</keyword>
<keyword id="KW-0934">Plastid</keyword>
<keyword id="KW-1185">Reference proteome</keyword>
<keyword id="KW-0809">Transit peptide</keyword>
<evidence type="ECO:0000255" key="1">
    <source>
        <dbReference type="PROSITE-ProRule" id="PRU01067"/>
    </source>
</evidence>
<evidence type="ECO:0000269" key="2">
    <source>
    </source>
</evidence>
<evidence type="ECO:0000269" key="3">
    <source>
    </source>
</evidence>
<evidence type="ECO:0000269" key="4">
    <source>
    </source>
</evidence>
<evidence type="ECO:0000303" key="5">
    <source>
    </source>
</evidence>
<evidence type="ECO:0000303" key="6">
    <source>
    </source>
</evidence>
<evidence type="ECO:0000305" key="7"/>
<evidence type="ECO:0000305" key="8">
    <source>
    </source>
</evidence>
<evidence type="ECO:0000312" key="9">
    <source>
        <dbReference type="EMBL" id="ABD60299.1"/>
    </source>
</evidence>
<evidence type="ECO:0000312" key="10">
    <source>
        <dbReference type="EMBL" id="CAD51918.1"/>
    </source>
</evidence>
<evidence type="ECO:0000312" key="11">
    <source>
        <dbReference type="Proteomes" id="UP000001450"/>
    </source>
</evidence>
<reference evidence="9" key="1">
    <citation type="journal article" date="2007" name="Mol. Microbiol.">
        <title>Scavenging of the cofactor lipoate is essential for the survival of the malaria parasite Plasmodium falciparum.</title>
        <authorList>
            <person name="Allary M."/>
            <person name="Lu J.Z."/>
            <person name="Zhu L."/>
            <person name="Prigge S.T."/>
        </authorList>
    </citation>
    <scope>NUCLEOTIDE SEQUENCE [MRNA]</scope>
    <source>
        <strain evidence="9">3D7</strain>
    </source>
</reference>
<reference evidence="11" key="2">
    <citation type="journal article" date="2002" name="Nature">
        <title>Genome sequence of the human malaria parasite Plasmodium falciparum.</title>
        <authorList>
            <person name="Gardner M.J."/>
            <person name="Hall N."/>
            <person name="Fung E."/>
            <person name="White O."/>
            <person name="Berriman M."/>
            <person name="Hyman R.W."/>
            <person name="Carlton J.M."/>
            <person name="Pain A."/>
            <person name="Nelson K.E."/>
            <person name="Bowman S."/>
            <person name="Paulsen I.T."/>
            <person name="James K.D."/>
            <person name="Eisen J.A."/>
            <person name="Rutherford K.M."/>
            <person name="Salzberg S.L."/>
            <person name="Craig A."/>
            <person name="Kyes S."/>
            <person name="Chan M.-S."/>
            <person name="Nene V."/>
            <person name="Shallom S.J."/>
            <person name="Suh B."/>
            <person name="Peterson J."/>
            <person name="Angiuoli S."/>
            <person name="Pertea M."/>
            <person name="Allen J."/>
            <person name="Selengut J."/>
            <person name="Haft D."/>
            <person name="Mather M.W."/>
            <person name="Vaidya A.B."/>
            <person name="Martin D.M.A."/>
            <person name="Fairlamb A.H."/>
            <person name="Fraunholz M.J."/>
            <person name="Roos D.S."/>
            <person name="Ralph S.A."/>
            <person name="McFadden G.I."/>
            <person name="Cummings L.M."/>
            <person name="Subramanian G.M."/>
            <person name="Mungall C."/>
            <person name="Venter J.C."/>
            <person name="Carucci D.J."/>
            <person name="Hoffman S.L."/>
            <person name="Newbold C."/>
            <person name="Davis R.W."/>
            <person name="Fraser C.M."/>
            <person name="Barrell B.G."/>
        </authorList>
    </citation>
    <scope>NUCLEOTIDE SEQUENCE [LARGE SCALE GENOMIC DNA]</scope>
    <source>
        <strain evidence="11">3D7</strain>
    </source>
</reference>
<reference evidence="11" key="3">
    <citation type="journal article" date="2002" name="Nature">
        <title>Sequence of Plasmodium falciparum chromosomes 1, 3-9 and 13.</title>
        <authorList>
            <person name="Hall N."/>
            <person name="Pain A."/>
            <person name="Berriman M."/>
            <person name="Churcher C.M."/>
            <person name="Harris B."/>
            <person name="Harris D."/>
            <person name="Mungall K.L."/>
            <person name="Bowman S."/>
            <person name="Atkin R."/>
            <person name="Baker S."/>
            <person name="Barron A."/>
            <person name="Brooks K."/>
            <person name="Buckee C.O."/>
            <person name="Burrows C."/>
            <person name="Cherevach I."/>
            <person name="Chillingworth C."/>
            <person name="Chillingworth T."/>
            <person name="Christodoulou Z."/>
            <person name="Clark L."/>
            <person name="Clark R."/>
            <person name="Corton C."/>
            <person name="Cronin A."/>
            <person name="Davies R.M."/>
            <person name="Davis P."/>
            <person name="Dear P."/>
            <person name="Dearden F."/>
            <person name="Doggett J."/>
            <person name="Feltwell T."/>
            <person name="Goble A."/>
            <person name="Goodhead I."/>
            <person name="Gwilliam R."/>
            <person name="Hamlin N."/>
            <person name="Hance Z."/>
            <person name="Harper D."/>
            <person name="Hauser H."/>
            <person name="Hornsby T."/>
            <person name="Holroyd S."/>
            <person name="Horrocks P."/>
            <person name="Humphray S."/>
            <person name="Jagels K."/>
            <person name="James K.D."/>
            <person name="Johnson D."/>
            <person name="Kerhornou A."/>
            <person name="Knights A."/>
            <person name="Konfortov B."/>
            <person name="Kyes S."/>
            <person name="Larke N."/>
            <person name="Lawson D."/>
            <person name="Lennard N."/>
            <person name="Line A."/>
            <person name="Maddison M."/>
            <person name="Mclean J."/>
            <person name="Mooney P."/>
            <person name="Moule S."/>
            <person name="Murphy L."/>
            <person name="Oliver K."/>
            <person name="Ormond D."/>
            <person name="Price C."/>
            <person name="Quail M.A."/>
            <person name="Rabbinowitsch E."/>
            <person name="Rajandream M.A."/>
            <person name="Rutter S."/>
            <person name="Rutherford K.M."/>
            <person name="Sanders M."/>
            <person name="Simmonds M."/>
            <person name="Seeger K."/>
            <person name="Sharp S."/>
            <person name="Smith R."/>
            <person name="Squares R."/>
            <person name="Squares S."/>
            <person name="Stevens K."/>
            <person name="Taylor K."/>
            <person name="Tivey A."/>
            <person name="Unwin L."/>
            <person name="Whitehead S."/>
            <person name="Woodward J.R."/>
            <person name="Sulston J.E."/>
            <person name="Craig A."/>
            <person name="Newbold C."/>
            <person name="Barrell B.G."/>
        </authorList>
    </citation>
    <scope>NUCLEOTIDE SEQUENCE [LARGE SCALE GENOMIC DNA]</scope>
    <source>
        <strain evidence="11">3D7</strain>
    </source>
</reference>
<reference evidence="7" key="4">
    <citation type="journal article" date="2007" name="PLoS Pathog.">
        <title>Apicoplast lipoic acid protein ligase B is not essential for Plasmodium falciparum.</title>
        <authorList>
            <person name="Guenther S."/>
            <person name="Wallace L."/>
            <person name="Patzewitz E.M."/>
            <person name="McMillan P.J."/>
            <person name="Storm J."/>
            <person name="Wrenger C."/>
            <person name="Bissett R."/>
            <person name="Smith T.K."/>
            <person name="Mueller S."/>
        </authorList>
    </citation>
    <scope>SUBCELLULAR LOCATION</scope>
</reference>
<reference evidence="7" key="5">
    <citation type="journal article" date="2014" name="Mol. Microbiol.">
        <title>Redox-dependent lipoylation of mitochondrial proteins in Plasmodium falciparum.</title>
        <authorList>
            <person name="Afanador G.A."/>
            <person name="Matthews K.A."/>
            <person name="Bartee D."/>
            <person name="Gisselberg J.E."/>
            <person name="Walters M.S."/>
            <person name="Freel Meyers C.L."/>
            <person name="Prigge S.T."/>
        </authorList>
    </citation>
    <scope>FUNCTION</scope>
    <scope>LACK OF LIPOATE PROTEIN LIGASE ACTIVITY</scope>
    <scope>MUTAGENESIS OF CYS-93 AND CYS-276</scope>
</reference>
<protein>
    <recommendedName>
        <fullName evidence="5">Inactive lipoate--protein ligase 2</fullName>
    </recommendedName>
</protein>
<accession>Q8I2S0</accession>
<accession>Q19X43</accession>
<feature type="transit peptide" description="Mitochondrion" evidence="8">
    <location>
        <begin position="1"/>
        <end status="unknown"/>
    </location>
</feature>
<feature type="chain" id="PRO_0000456652" description="Inactive lipoate--protein ligase 2">
    <location>
        <begin status="unknown"/>
        <end position="384"/>
    </location>
</feature>
<feature type="domain" description="BPL/LPL catalytic" evidence="1">
    <location>
        <begin position="79"/>
        <end position="303"/>
    </location>
</feature>
<feature type="mutagenesis site" description="No effect on lipoylation of BCKDH-E2/BCDH and KDH in the presence of LipL1." evidence="4">
    <original>C</original>
    <variation>A</variation>
    <location>
        <position position="93"/>
    </location>
</feature>
<feature type="mutagenesis site" description="No effect on lipoylation of BCKDH-E2/BCDH and KDH in the presence of LipL1." evidence="4">
    <original>C</original>
    <variation>A</variation>
    <location>
        <position position="276"/>
    </location>
</feature>
<dbReference type="EMBL" id="DQ400341">
    <property type="protein sequence ID" value="ABD60299.1"/>
    <property type="molecule type" value="mRNA"/>
</dbReference>
<dbReference type="EMBL" id="AL844508">
    <property type="protein sequence ID" value="CAD51918.1"/>
    <property type="molecule type" value="Genomic_DNA"/>
</dbReference>
<dbReference type="RefSeq" id="XP_001352107.1">
    <property type="nucleotide sequence ID" value="XM_001352071.1"/>
</dbReference>
<dbReference type="SMR" id="Q8I2S0"/>
<dbReference type="FunCoup" id="Q8I2S0">
    <property type="interactions" value="62"/>
</dbReference>
<dbReference type="STRING" id="36329.Q8I2S0"/>
<dbReference type="PaxDb" id="5833-PFI1160w"/>
<dbReference type="EnsemblProtists" id="CAD51918">
    <property type="protein sequence ID" value="CAD51918"/>
    <property type="gene ID" value="PF3D7_0923600"/>
</dbReference>
<dbReference type="GeneID" id="813512"/>
<dbReference type="KEGG" id="pfa:PF3D7_0923600"/>
<dbReference type="VEuPathDB" id="PlasmoDB:PF3D7_0923600"/>
<dbReference type="VEuPathDB" id="PlasmoDB:Pf7G8-2_000271600"/>
<dbReference type="VEuPathDB" id="PlasmoDB:Pf7G8_090028400"/>
<dbReference type="VEuPathDB" id="PlasmoDB:PfCD01_090027900"/>
<dbReference type="VEuPathDB" id="PlasmoDB:PfDd2_090028600"/>
<dbReference type="VEuPathDB" id="PlasmoDB:PfGA01_090027800"/>
<dbReference type="VEuPathDB" id="PlasmoDB:PfGB4_090028500"/>
<dbReference type="VEuPathDB" id="PlasmoDB:PfGN01_090028400"/>
<dbReference type="VEuPathDB" id="PlasmoDB:PfHB3_090028200"/>
<dbReference type="VEuPathDB" id="PlasmoDB:PfIT_090028100"/>
<dbReference type="VEuPathDB" id="PlasmoDB:PfKE01_090027900"/>
<dbReference type="VEuPathDB" id="PlasmoDB:PfKH01_090027800"/>
<dbReference type="VEuPathDB" id="PlasmoDB:PfKH02_090028300"/>
<dbReference type="VEuPathDB" id="PlasmoDB:PfML01_090028000"/>
<dbReference type="VEuPathDB" id="PlasmoDB:PfNF135_090027200"/>
<dbReference type="VEuPathDB" id="PlasmoDB:PfNF166_090027600"/>
<dbReference type="VEuPathDB" id="PlasmoDB:PfNF54_090028700"/>
<dbReference type="VEuPathDB" id="PlasmoDB:PfSD01_090028500"/>
<dbReference type="VEuPathDB" id="PlasmoDB:PfSN01_090028100"/>
<dbReference type="VEuPathDB" id="PlasmoDB:PfTG01_090027900"/>
<dbReference type="HOGENOM" id="CLU_714723_0_0_1"/>
<dbReference type="InParanoid" id="Q8I2S0"/>
<dbReference type="OMA" id="TEWVFNS"/>
<dbReference type="OrthoDB" id="201621at2759"/>
<dbReference type="PhylomeDB" id="Q8I2S0"/>
<dbReference type="Proteomes" id="UP000001450">
    <property type="component" value="Chromosome 9"/>
</dbReference>
<dbReference type="GO" id="GO:0020011">
    <property type="term" value="C:apicoplast"/>
    <property type="evidence" value="ECO:0000314"/>
    <property type="project" value="GeneDB"/>
</dbReference>
<dbReference type="GO" id="GO:0005739">
    <property type="term" value="C:mitochondrion"/>
    <property type="evidence" value="ECO:0000314"/>
    <property type="project" value="GeneDB"/>
</dbReference>
<dbReference type="GO" id="GO:0016979">
    <property type="term" value="F:lipoate-protein ligase activity"/>
    <property type="evidence" value="ECO:0000314"/>
    <property type="project" value="GeneDB"/>
</dbReference>
<dbReference type="GO" id="GO:0036211">
    <property type="term" value="P:protein modification process"/>
    <property type="evidence" value="ECO:0007669"/>
    <property type="project" value="InterPro"/>
</dbReference>
<dbReference type="FunFam" id="3.30.930.10:FF:000103">
    <property type="entry name" value="Lipoate-protein ligase A type 2"/>
    <property type="match status" value="1"/>
</dbReference>
<dbReference type="Gene3D" id="3.30.930.10">
    <property type="entry name" value="Bira Bifunctional Protein, Domain 2"/>
    <property type="match status" value="1"/>
</dbReference>
<dbReference type="InterPro" id="IPR045864">
    <property type="entry name" value="aa-tRNA-synth_II/BPL/LPL"/>
</dbReference>
<dbReference type="InterPro" id="IPR004143">
    <property type="entry name" value="BPL_LPL_catalytic"/>
</dbReference>
<dbReference type="InterPro" id="IPR053264">
    <property type="entry name" value="Lipoate-ligase_2_inactive"/>
</dbReference>
<dbReference type="PANTHER" id="PTHR43506">
    <property type="entry name" value="BIOTIN/LIPOATE A/B PROTEIN LIGASE FAMILY"/>
    <property type="match status" value="1"/>
</dbReference>
<dbReference type="PANTHER" id="PTHR43506:SF1">
    <property type="entry name" value="BPL_LPL CATALYTIC DOMAIN-CONTAINING PROTEIN"/>
    <property type="match status" value="1"/>
</dbReference>
<dbReference type="Pfam" id="PF21948">
    <property type="entry name" value="LplA-B_cat"/>
    <property type="match status" value="1"/>
</dbReference>
<dbReference type="SUPFAM" id="SSF55681">
    <property type="entry name" value="Class II aaRS and biotin synthetases"/>
    <property type="match status" value="1"/>
</dbReference>
<gene>
    <name evidence="5" type="primary">LipL2</name>
    <name evidence="6" type="synonym">LplA2</name>
    <name evidence="10" type="ORF">PF3D7_0923600</name>
</gene>
<organism evidence="11">
    <name type="scientific">Plasmodium falciparum (isolate 3D7)</name>
    <dbReference type="NCBI Taxonomy" id="36329"/>
    <lineage>
        <taxon>Eukaryota</taxon>
        <taxon>Sar</taxon>
        <taxon>Alveolata</taxon>
        <taxon>Apicomplexa</taxon>
        <taxon>Aconoidasida</taxon>
        <taxon>Haemosporida</taxon>
        <taxon>Plasmodiidae</taxon>
        <taxon>Plasmodium</taxon>
        <taxon>Plasmodium (Laverania)</taxon>
    </lineage>
</organism>
<comment type="function">
    <text evidence="4">In the mitochondrion and together with LipL1, involved in the lipoylation of the E2 component of the branched chain alpha-ketoacid dehydrogenase complex BCKDH-E2/BCDH and the E2 component of the alpha -ketoglutarate dehydrogenase complex KDH (PubMed:25116855). LipL1 is responsible for catalysing the activation of lipoate, forming lipoyl-AMP while LipL2 is required but is not capable of catalyzing this reaction (PubMed:25116855). Although its role is unclear, it may catalyze the transfer of lipoyl groups from lipoyl-AMP to BCDH and KDH or act as an effector protein (PubMed:25116855).</text>
</comment>
<comment type="subcellular location">
    <subcellularLocation>
        <location evidence="3">Mitochondrion</location>
    </subcellularLocation>
    <subcellularLocation>
        <location evidence="3">Plastid</location>
        <location evidence="3">Apicoplast</location>
    </subcellularLocation>
    <text evidence="3">Predominantly localizes to the mitochondrion.</text>
</comment>
<comment type="caution">
    <text evidence="2 3 4">Lacks lipoate-protein ligase activity, probably due the loss of the lysine residue involved in the formation of the lipoyl-AMP reaction intermediate (PubMed:25116855). However, in some studies appears to be able to partially rescue ligase activity in E.coli lacking ligases lplA and lipB (PubMed:17244193, PubMed:18069893).</text>
</comment>